<protein>
    <recommendedName>
        <fullName evidence="1">Urease accessory protein UreD</fullName>
    </recommendedName>
</protein>
<reference key="1">
    <citation type="journal article" date="2009" name="Appl. Environ. Microbiol.">
        <title>Complete genome sequence of the chemolithoautotrophic marine magnetotactic coccus strain MC-1.</title>
        <authorList>
            <person name="Schubbe S."/>
            <person name="Williams T.J."/>
            <person name="Xie G."/>
            <person name="Kiss H.E."/>
            <person name="Brettin T.S."/>
            <person name="Martinez D."/>
            <person name="Ross C.A."/>
            <person name="Schuler D."/>
            <person name="Cox B.L."/>
            <person name="Nealson K.H."/>
            <person name="Bazylinski D.A."/>
        </authorList>
    </citation>
    <scope>NUCLEOTIDE SEQUENCE [LARGE SCALE GENOMIC DNA]</scope>
    <source>
        <strain>ATCC BAA-1437 / JCM 17883 / MC-1</strain>
    </source>
</reference>
<accession>A0L6E9</accession>
<proteinExistence type="inferred from homology"/>
<evidence type="ECO:0000255" key="1">
    <source>
        <dbReference type="HAMAP-Rule" id="MF_01384"/>
    </source>
</evidence>
<feature type="chain" id="PRO_0000340459" description="Urease accessory protein UreD">
    <location>
        <begin position="1"/>
        <end position="289"/>
    </location>
</feature>
<sequence length="289" mass="31722">MRSAATLPYESNPSQGVQGCVRLSFVQRHGQSRLESLYHSDPMRVIIPQTPPGEPVHGVVVTTSGGLVGGDQLDIELIARPHTQLLVMTQAAEKVYRSTGADSTVQIALHVEAGAFLEWLPQETILFDQGRLRRTTQVYLGENARLLAGEMVLFGRSAHGEQLRQGLLRDSWLVHREGALVWADLLKLEGDLQHPLQHPAALAGAKGCATLLLAGEEAAQLLEPLRGWLAEAGMEGPSVKVAAGVVHGLLVVRWLGWDARLLRQGYGQMWSWLRGQLGRPARMPRLWDI</sequence>
<comment type="function">
    <text evidence="1">Required for maturation of urease via the functional incorporation of the urease nickel metallocenter.</text>
</comment>
<comment type="subunit">
    <text evidence="1">UreD, UreF and UreG form a complex that acts as a GTP-hydrolysis-dependent molecular chaperone, activating the urease apoprotein by helping to assemble the nickel containing metallocenter of UreC. The UreE protein probably delivers the nickel.</text>
</comment>
<comment type="subcellular location">
    <subcellularLocation>
        <location evidence="1">Cytoplasm</location>
    </subcellularLocation>
</comment>
<comment type="similarity">
    <text evidence="1">Belongs to the UreD family.</text>
</comment>
<dbReference type="EMBL" id="CP000471">
    <property type="protein sequence ID" value="ABK43542.1"/>
    <property type="molecule type" value="Genomic_DNA"/>
</dbReference>
<dbReference type="RefSeq" id="WP_011712699.1">
    <property type="nucleotide sequence ID" value="NC_008576.1"/>
</dbReference>
<dbReference type="SMR" id="A0L6E9"/>
<dbReference type="STRING" id="156889.Mmc1_1024"/>
<dbReference type="KEGG" id="mgm:Mmc1_1024"/>
<dbReference type="eggNOG" id="COG0829">
    <property type="taxonomic scope" value="Bacteria"/>
</dbReference>
<dbReference type="HOGENOM" id="CLU_056339_2_0_5"/>
<dbReference type="OrthoDB" id="9798842at2"/>
<dbReference type="Proteomes" id="UP000002586">
    <property type="component" value="Chromosome"/>
</dbReference>
<dbReference type="GO" id="GO:0005737">
    <property type="term" value="C:cytoplasm"/>
    <property type="evidence" value="ECO:0007669"/>
    <property type="project" value="UniProtKB-SubCell"/>
</dbReference>
<dbReference type="GO" id="GO:0016151">
    <property type="term" value="F:nickel cation binding"/>
    <property type="evidence" value="ECO:0007669"/>
    <property type="project" value="UniProtKB-UniRule"/>
</dbReference>
<dbReference type="HAMAP" id="MF_01384">
    <property type="entry name" value="UreD"/>
    <property type="match status" value="1"/>
</dbReference>
<dbReference type="InterPro" id="IPR002669">
    <property type="entry name" value="UreD"/>
</dbReference>
<dbReference type="PANTHER" id="PTHR33643">
    <property type="entry name" value="UREASE ACCESSORY PROTEIN D"/>
    <property type="match status" value="1"/>
</dbReference>
<dbReference type="PANTHER" id="PTHR33643:SF1">
    <property type="entry name" value="UREASE ACCESSORY PROTEIN D"/>
    <property type="match status" value="1"/>
</dbReference>
<dbReference type="Pfam" id="PF01774">
    <property type="entry name" value="UreD"/>
    <property type="match status" value="1"/>
</dbReference>
<keyword id="KW-0143">Chaperone</keyword>
<keyword id="KW-0963">Cytoplasm</keyword>
<keyword id="KW-0996">Nickel insertion</keyword>
<keyword id="KW-1185">Reference proteome</keyword>
<organism>
    <name type="scientific">Magnetococcus marinus (strain ATCC BAA-1437 / JCM 17883 / MC-1)</name>
    <dbReference type="NCBI Taxonomy" id="156889"/>
    <lineage>
        <taxon>Bacteria</taxon>
        <taxon>Pseudomonadati</taxon>
        <taxon>Pseudomonadota</taxon>
        <taxon>Alphaproteobacteria</taxon>
        <taxon>Magnetococcales</taxon>
        <taxon>Magnetococcaceae</taxon>
        <taxon>Magnetococcus</taxon>
    </lineage>
</organism>
<name>URED_MAGMM</name>
<gene>
    <name evidence="1" type="primary">ureD</name>
    <name type="ordered locus">Mmc1_1024</name>
</gene>